<organism>
    <name type="scientific">Trypanosoma brucei brucei</name>
    <dbReference type="NCBI Taxonomy" id="5702"/>
    <lineage>
        <taxon>Eukaryota</taxon>
        <taxon>Discoba</taxon>
        <taxon>Euglenozoa</taxon>
        <taxon>Kinetoplastea</taxon>
        <taxon>Metakinetoplastina</taxon>
        <taxon>Trypanosomatida</taxon>
        <taxon>Trypanosomatidae</taxon>
        <taxon>Trypanosoma</taxon>
    </lineage>
</organism>
<evidence type="ECO:0000250" key="1"/>
<evidence type="ECO:0000255" key="2">
    <source>
        <dbReference type="PROSITE-ProRule" id="PRU00159"/>
    </source>
</evidence>
<evidence type="ECO:0000255" key="3">
    <source>
        <dbReference type="PROSITE-ProRule" id="PRU10027"/>
    </source>
</evidence>
<evidence type="ECO:0000305" key="4"/>
<reference key="1">
    <citation type="journal article" date="1995" name="Gene">
        <title>A family of trypanosome cdc2-related protein kinases.</title>
        <authorList>
            <person name="Mottram J."/>
            <person name="Smith G."/>
        </authorList>
    </citation>
    <scope>NUCLEOTIDE SEQUENCE [GENOMIC DNA]</scope>
    <source>
        <strain>ISTAT</strain>
    </source>
</reference>
<comment type="function">
    <text>Probably involved in the control of the cell cycle.</text>
</comment>
<comment type="catalytic activity">
    <reaction>
        <text>L-seryl-[protein] + ATP = O-phospho-L-seryl-[protein] + ADP + H(+)</text>
        <dbReference type="Rhea" id="RHEA:17989"/>
        <dbReference type="Rhea" id="RHEA-COMP:9863"/>
        <dbReference type="Rhea" id="RHEA-COMP:11604"/>
        <dbReference type="ChEBI" id="CHEBI:15378"/>
        <dbReference type="ChEBI" id="CHEBI:29999"/>
        <dbReference type="ChEBI" id="CHEBI:30616"/>
        <dbReference type="ChEBI" id="CHEBI:83421"/>
        <dbReference type="ChEBI" id="CHEBI:456216"/>
        <dbReference type="EC" id="2.7.11.22"/>
    </reaction>
</comment>
<comment type="catalytic activity">
    <reaction>
        <text>L-threonyl-[protein] + ATP = O-phospho-L-threonyl-[protein] + ADP + H(+)</text>
        <dbReference type="Rhea" id="RHEA:46608"/>
        <dbReference type="Rhea" id="RHEA-COMP:11060"/>
        <dbReference type="Rhea" id="RHEA-COMP:11605"/>
        <dbReference type="ChEBI" id="CHEBI:15378"/>
        <dbReference type="ChEBI" id="CHEBI:30013"/>
        <dbReference type="ChEBI" id="CHEBI:30616"/>
        <dbReference type="ChEBI" id="CHEBI:61977"/>
        <dbReference type="ChEBI" id="CHEBI:456216"/>
        <dbReference type="EC" id="2.7.11.22"/>
    </reaction>
</comment>
<comment type="activity regulation">
    <text>Phosphorylation at Thr-33 or Tyr-34 inactivates the enzyme.</text>
</comment>
<comment type="subunit">
    <text evidence="1">Forms a stable but non-covalent complex with a regulatory subunit and with a cyclin.</text>
</comment>
<comment type="similarity">
    <text evidence="4">Belongs to the protein kinase superfamily. CMGC Ser/Thr protein kinase family. CDC2/CDKX subfamily.</text>
</comment>
<accession>P54666</accession>
<protein>
    <recommendedName>
        <fullName>Cell division control protein 2 homolog 3</fullName>
        <ecNumber>2.7.11.22</ecNumber>
    </recommendedName>
</protein>
<keyword id="KW-0067">ATP-binding</keyword>
<keyword id="KW-0418">Kinase</keyword>
<keyword id="KW-0547">Nucleotide-binding</keyword>
<keyword id="KW-0597">Phosphoprotein</keyword>
<keyword id="KW-0723">Serine/threonine-protein kinase</keyword>
<keyword id="KW-0808">Transferase</keyword>
<name>CC2H3_TRYBB</name>
<feature type="chain" id="PRO_0000085709" description="Cell division control protein 2 homolog 3">
    <location>
        <begin position="1"/>
        <end position="311"/>
    </location>
</feature>
<feature type="domain" description="Protein kinase" evidence="2">
    <location>
        <begin position="23"/>
        <end position="306"/>
    </location>
</feature>
<feature type="active site" description="Proton acceptor" evidence="2 3">
    <location>
        <position position="145"/>
    </location>
</feature>
<feature type="binding site" evidence="2">
    <location>
        <begin position="29"/>
        <end position="37"/>
    </location>
    <ligand>
        <name>ATP</name>
        <dbReference type="ChEBI" id="CHEBI:30616"/>
    </ligand>
</feature>
<feature type="binding site" evidence="2">
    <location>
        <position position="52"/>
    </location>
    <ligand>
        <name>ATP</name>
        <dbReference type="ChEBI" id="CHEBI:30616"/>
    </ligand>
</feature>
<feature type="modified residue" description="Phosphothreonine" evidence="1">
    <location>
        <position position="33"/>
    </location>
</feature>
<feature type="modified residue" description="Phosphotyrosine" evidence="1">
    <location>
        <position position="34"/>
    </location>
</feature>
<sequence>MTMLGALTGRQLSSGLKDQFDRYNRMDILGEGTYGVVYRAVDRATGQIVALKKVRLDRTDEGIPQTALREVSILQEIHHPNIVNLLDVICADGKLYLIFEYVDHDLKKALEKRGGAFTGTTLKKIIYQLLEGLSFCHRHRIVHRDLKPANILVTTDNSVKIADFGLARAFQIPMHTYTHEVVTLWYRAPEILLGEKHYTPAVDMWSIGCIFAELARGKVLFRGDSEIGQLFEIFQVLGTPMDAEGSWLGVSSLPDYRDVFPKWSGKPLTQVLPTLDGDAVDLLSQMLRYNPAERISAKAALQHPWFSDAMF</sequence>
<gene>
    <name type="primary">CRK3</name>
</gene>
<proteinExistence type="inferred from homology"/>
<dbReference type="EC" id="2.7.11.22"/>
<dbReference type="EMBL" id="X74617">
    <property type="protein sequence ID" value="CAA52688.1"/>
    <property type="molecule type" value="Genomic_DNA"/>
</dbReference>
<dbReference type="PIR" id="S36619">
    <property type="entry name" value="S36619"/>
</dbReference>
<dbReference type="SMR" id="P54666"/>
<dbReference type="BRENDA" id="2.7.11.22">
    <property type="organism ID" value="6520"/>
</dbReference>
<dbReference type="GO" id="GO:0000307">
    <property type="term" value="C:cyclin-dependent protein kinase holoenzyme complex"/>
    <property type="evidence" value="ECO:0007669"/>
    <property type="project" value="TreeGrafter"/>
</dbReference>
<dbReference type="GO" id="GO:0005737">
    <property type="term" value="C:cytoplasm"/>
    <property type="evidence" value="ECO:0000314"/>
    <property type="project" value="GeneDB"/>
</dbReference>
<dbReference type="GO" id="GO:0005634">
    <property type="term" value="C:nucleus"/>
    <property type="evidence" value="ECO:0007669"/>
    <property type="project" value="TreeGrafter"/>
</dbReference>
<dbReference type="GO" id="GO:0005524">
    <property type="term" value="F:ATP binding"/>
    <property type="evidence" value="ECO:0000255"/>
    <property type="project" value="GeneDB"/>
</dbReference>
<dbReference type="GO" id="GO:0030332">
    <property type="term" value="F:cyclin binding"/>
    <property type="evidence" value="ECO:0007669"/>
    <property type="project" value="TreeGrafter"/>
</dbReference>
<dbReference type="GO" id="GO:0004693">
    <property type="term" value="F:cyclin-dependent protein serine/threonine kinase activity"/>
    <property type="evidence" value="ECO:0007669"/>
    <property type="project" value="UniProtKB-EC"/>
</dbReference>
<dbReference type="GO" id="GO:0106310">
    <property type="term" value="F:protein serine kinase activity"/>
    <property type="evidence" value="ECO:0007669"/>
    <property type="project" value="RHEA"/>
</dbReference>
<dbReference type="GO" id="GO:0004674">
    <property type="term" value="F:protein serine/threonine kinase activity"/>
    <property type="evidence" value="ECO:0000255"/>
    <property type="project" value="GeneDB"/>
</dbReference>
<dbReference type="GO" id="GO:0000082">
    <property type="term" value="P:G1/S transition of mitotic cell cycle"/>
    <property type="evidence" value="ECO:0007669"/>
    <property type="project" value="TreeGrafter"/>
</dbReference>
<dbReference type="GO" id="GO:0000278">
    <property type="term" value="P:mitotic cell cycle"/>
    <property type="evidence" value="ECO:0000304"/>
    <property type="project" value="GeneDB"/>
</dbReference>
<dbReference type="GO" id="GO:0006468">
    <property type="term" value="P:protein phosphorylation"/>
    <property type="evidence" value="ECO:0000255"/>
    <property type="project" value="GeneDB"/>
</dbReference>
<dbReference type="GO" id="GO:0010389">
    <property type="term" value="P:regulation of G2/M transition of mitotic cell cycle"/>
    <property type="evidence" value="ECO:0007669"/>
    <property type="project" value="TreeGrafter"/>
</dbReference>
<dbReference type="GO" id="GO:0010468">
    <property type="term" value="P:regulation of gene expression"/>
    <property type="evidence" value="ECO:0007669"/>
    <property type="project" value="TreeGrafter"/>
</dbReference>
<dbReference type="GO" id="GO:0007165">
    <property type="term" value="P:signal transduction"/>
    <property type="evidence" value="ECO:0007669"/>
    <property type="project" value="TreeGrafter"/>
</dbReference>
<dbReference type="CDD" id="cd07829">
    <property type="entry name" value="STKc_CDK_like"/>
    <property type="match status" value="1"/>
</dbReference>
<dbReference type="FunFam" id="1.10.510.10:FF:000574">
    <property type="entry name" value="Cell division related protein kinase 2"/>
    <property type="match status" value="1"/>
</dbReference>
<dbReference type="FunFam" id="3.30.200.20:FF:000375">
    <property type="entry name" value="Cell division related protein kinase 2"/>
    <property type="match status" value="1"/>
</dbReference>
<dbReference type="Gene3D" id="3.30.200.20">
    <property type="entry name" value="Phosphorylase Kinase, domain 1"/>
    <property type="match status" value="1"/>
</dbReference>
<dbReference type="Gene3D" id="1.10.510.10">
    <property type="entry name" value="Transferase(Phosphotransferase) domain 1"/>
    <property type="match status" value="1"/>
</dbReference>
<dbReference type="InterPro" id="IPR050108">
    <property type="entry name" value="CDK"/>
</dbReference>
<dbReference type="InterPro" id="IPR011009">
    <property type="entry name" value="Kinase-like_dom_sf"/>
</dbReference>
<dbReference type="InterPro" id="IPR000719">
    <property type="entry name" value="Prot_kinase_dom"/>
</dbReference>
<dbReference type="InterPro" id="IPR017441">
    <property type="entry name" value="Protein_kinase_ATP_BS"/>
</dbReference>
<dbReference type="InterPro" id="IPR008271">
    <property type="entry name" value="Ser/Thr_kinase_AS"/>
</dbReference>
<dbReference type="PANTHER" id="PTHR24056">
    <property type="entry name" value="CELL DIVISION PROTEIN KINASE"/>
    <property type="match status" value="1"/>
</dbReference>
<dbReference type="PANTHER" id="PTHR24056:SF254">
    <property type="entry name" value="CYCLIN-DEPENDENT KINASE 2"/>
    <property type="match status" value="1"/>
</dbReference>
<dbReference type="Pfam" id="PF00069">
    <property type="entry name" value="Pkinase"/>
    <property type="match status" value="1"/>
</dbReference>
<dbReference type="SMART" id="SM00220">
    <property type="entry name" value="S_TKc"/>
    <property type="match status" value="1"/>
</dbReference>
<dbReference type="SUPFAM" id="SSF56112">
    <property type="entry name" value="Protein kinase-like (PK-like)"/>
    <property type="match status" value="1"/>
</dbReference>
<dbReference type="PROSITE" id="PS00107">
    <property type="entry name" value="PROTEIN_KINASE_ATP"/>
    <property type="match status" value="1"/>
</dbReference>
<dbReference type="PROSITE" id="PS50011">
    <property type="entry name" value="PROTEIN_KINASE_DOM"/>
    <property type="match status" value="1"/>
</dbReference>
<dbReference type="PROSITE" id="PS00108">
    <property type="entry name" value="PROTEIN_KINASE_ST"/>
    <property type="match status" value="1"/>
</dbReference>